<reference key="1">
    <citation type="journal article" date="1997" name="Eur. J. Biochem.">
        <title>Sequence of a gene cluster from Malonomonas rubra encoding components of the malonate decarboxylase Na+ pump and evidence for their function.</title>
        <authorList>
            <person name="Berg M."/>
            <person name="Hilbi H."/>
            <person name="Dimroth P."/>
        </authorList>
    </citation>
    <scope>NUCLEOTIDE SEQUENCE [GENOMIC DNA]</scope>
    <scope>CHARACTERIZATION</scope>
</reference>
<reference key="2">
    <citation type="journal article" date="1994" name="Arch. Microbiol.">
        <title>Purification and characterization of a cytoplasmic enzyme component of the Na+-activated malonate decarboxylase system of Malonomonas rubra: acetyl-S-acyl carrier protein: malonate acyl carrier protein-SH transferase.</title>
        <authorList>
            <person name="Hilbi H."/>
            <person name="Dimroth P."/>
        </authorList>
    </citation>
    <scope>FUNCTION</scope>
    <scope>CATALYTIC ACTIVITY</scope>
    <scope>BIOPHYSICOCHEMICAL PROPERTIES</scope>
</reference>
<evidence type="ECO:0000269" key="1">
    <source>
    </source>
</evidence>
<evidence type="ECO:0000305" key="2"/>
<comment type="function">
    <text evidence="1">Alpha subunit of the biotin-independent and biotin-dependent malonate decarboxylase multienzyme complex (EC 4.1.1.88 and EC 7.2.4.4, respectively). Acts as an acyl-carrier protein (ACP) transferase component. This first step in malonate decarboxylation involves the exchange of an acetyl thioester residue bound to the activated ACP subunit for a malonyl thioester residue. Has a weak activity with acetyl-CoA as substrate.</text>
</comment>
<comment type="catalytic activity">
    <reaction evidence="1">
        <text>acetyl-[ACP] + malonate = malonyl-[ACP] + acetate</text>
        <dbReference type="Rhea" id="RHEA:17649"/>
        <dbReference type="Rhea" id="RHEA-COMP:9621"/>
        <dbReference type="Rhea" id="RHEA-COMP:9623"/>
        <dbReference type="ChEBI" id="CHEBI:15792"/>
        <dbReference type="ChEBI" id="CHEBI:30089"/>
        <dbReference type="ChEBI" id="CHEBI:78446"/>
        <dbReference type="ChEBI" id="CHEBI:78449"/>
        <dbReference type="EC" id="2.3.1.187"/>
    </reaction>
</comment>
<comment type="biophysicochemical properties">
    <kinetics>
        <KM evidence="1">0.5 mM for malonate</KM>
        <KM evidence="1">1.9 mM for malonyl-CoA</KM>
        <KM evidence="1">6.9 mM for acetyl-CoA</KM>
        <KM evidence="1">54 mM for acetate</KM>
    </kinetics>
    <phDependence>
        <text evidence="1">Optimum pH is 5.5.</text>
    </phDependence>
</comment>
<comment type="subcellular location">
    <subcellularLocation>
        <location evidence="2">Cytoplasm</location>
    </subcellularLocation>
</comment>
<accession>O06924</accession>
<protein>
    <recommendedName>
        <fullName>Acetyl-S-ACP:malonate ACP transferase</fullName>
        <shortName>ACP transferase</shortName>
        <ecNumber>2.3.1.187</ecNumber>
    </recommendedName>
    <alternativeName>
        <fullName>Malonate/acetyl-CoA transferase</fullName>
    </alternativeName>
</protein>
<organism>
    <name type="scientific">Malonomonas rubra</name>
    <dbReference type="NCBI Taxonomy" id="57040"/>
    <lineage>
        <taxon>Bacteria</taxon>
        <taxon>Pseudomonadati</taxon>
        <taxon>Thermodesulfobacteriota</taxon>
        <taxon>Desulfuromonadia</taxon>
        <taxon>Desulfuromonadales</taxon>
        <taxon>Geopsychrobacteraceae</taxon>
        <taxon>Malonomonas</taxon>
    </lineage>
</organism>
<gene>
    <name type="primary">madA</name>
</gene>
<name>MADA_MALRU</name>
<dbReference type="EC" id="2.3.1.187"/>
<dbReference type="EMBL" id="U87980">
    <property type="protein sequence ID" value="AAC45400.1"/>
    <property type="molecule type" value="Genomic_DNA"/>
</dbReference>
<dbReference type="SMR" id="O06924"/>
<dbReference type="TCDB" id="3.B.1.1.4">
    <property type="family name" value="the na(+)-transporting carboxylic acid decarboxylase (nat-dc) family"/>
</dbReference>
<dbReference type="KEGG" id="ag:AAC45400"/>
<dbReference type="BioCyc" id="MetaCyc:MONOMER-14254"/>
<dbReference type="GO" id="GO:0005737">
    <property type="term" value="C:cytoplasm"/>
    <property type="evidence" value="ECO:0007669"/>
    <property type="project" value="UniProtKB-SubCell"/>
</dbReference>
<dbReference type="GO" id="GO:0016740">
    <property type="term" value="F:transferase activity"/>
    <property type="evidence" value="ECO:0007669"/>
    <property type="project" value="UniProtKB-KW"/>
</dbReference>
<dbReference type="Gene3D" id="3.40.1080.10">
    <property type="entry name" value="Glutaconate Coenzyme A-transferase"/>
    <property type="match status" value="1"/>
</dbReference>
<dbReference type="InterPro" id="IPR005777">
    <property type="entry name" value="MadA"/>
</dbReference>
<dbReference type="InterPro" id="IPR037171">
    <property type="entry name" value="NagB/RpiA_transferase-like"/>
</dbReference>
<dbReference type="NCBIfam" id="TIGR01110">
    <property type="entry name" value="mdcA"/>
    <property type="match status" value="1"/>
</dbReference>
<dbReference type="PANTHER" id="PTHR43293">
    <property type="entry name" value="ACETATE COA-TRANSFERASE YDIF"/>
    <property type="match status" value="1"/>
</dbReference>
<dbReference type="PANTHER" id="PTHR43293:SF2">
    <property type="entry name" value="MALONATE DECARBOXYLASE ALPHA SUBUNIT"/>
    <property type="match status" value="1"/>
</dbReference>
<dbReference type="Pfam" id="PF16957">
    <property type="entry name" value="Mal_decarbox_Al"/>
    <property type="match status" value="1"/>
</dbReference>
<dbReference type="SUPFAM" id="SSF100950">
    <property type="entry name" value="NagB/RpiA/CoA transferase-like"/>
    <property type="match status" value="2"/>
</dbReference>
<keyword id="KW-0963">Cytoplasm</keyword>
<keyword id="KW-0808">Transferase</keyword>
<feature type="chain" id="PRO_0000424274" description="Acetyl-S-ACP:malonate ACP transferase">
    <location>
        <begin position="1"/>
        <end position="554"/>
    </location>
</feature>
<sequence length="554" mass="61148">MQKEKVWDKLSTDTEERMNAANELFSDRKVVPSQNGVALLEAVIRAGDRINLEGNNQKQADFLAECLGSCDSEKINNLHMVQSAVPLPIHLDIFDKGIAKKLDFAYGGPMAAKVAEFLREGKLELGAIHTYLELFARYFMDLTPRVSLICAYEGDKDGNLYTGFNTEDTPVIAEATKFRQGIVIAQVNKLVDKVQRVDIPGEWVDAVIESPKPFYLEPLFTRDPANITDTQVLMGMMALKGIYGEYGVQRLNHGIGFFTAAIELLLPTYGNELGLKGKICKHFALNPHPTMIPAIEDGWVESIHSFGGELGMQKYCEARPDIFFIGPDGSMRSNRAYSQTAGHYATDMFIGGTLQIDKYGNSSTATASRVAGFGGAPNMGCDAKGRRHVTDSWLKCGAEFEDQAALLGDMPRGKRLVVQMQETFKEKMDPSFVEKLDAWNLAKNANLDLAPVMIYSDDLTHIVTEEGIAYLAKCRGLEERMAAIRGVAGYTEVGLSADPKETKTLRERGIVKTPEDLGIDRSRANRSMLAAKSVKDLVDCSGGLYEPPARFVNW</sequence>
<proteinExistence type="evidence at protein level"/>